<accession>Q1I3U3</accession>
<protein>
    <recommendedName>
        <fullName evidence="1">Bifunctional protein PyrR</fullName>
    </recommendedName>
    <domain>
        <recommendedName>
            <fullName evidence="1">Pyrimidine operon regulatory protein</fullName>
        </recommendedName>
    </domain>
    <domain>
        <recommendedName>
            <fullName evidence="1">Uracil phosphoribosyltransferase</fullName>
            <shortName evidence="1">UPRTase</shortName>
            <ecNumber evidence="1">2.4.2.9</ecNumber>
        </recommendedName>
    </domain>
</protein>
<proteinExistence type="inferred from homology"/>
<gene>
    <name evidence="1" type="primary">pyrR</name>
    <name type="ordered locus">PSEEN5060</name>
</gene>
<sequence>MSLPNPADLIRQMAVDLRAHLARREITEPRFIGIRTGGVWVAQALQAELGDQSPLGTLDVSFYRDDFSQNGLHPQVRPSELPFEIEGQHLVLVDDVLMSGRTIRAALNELFDYGRPASVTLACLLDLDAGELPIRPNVLGATLSLAAHERVKLTGPTPLALERQDLAPASAL</sequence>
<keyword id="KW-0328">Glycosyltransferase</keyword>
<keyword id="KW-0804">Transcription</keyword>
<keyword id="KW-0805">Transcription regulation</keyword>
<keyword id="KW-0808">Transferase</keyword>
<evidence type="ECO:0000255" key="1">
    <source>
        <dbReference type="HAMAP-Rule" id="MF_01219"/>
    </source>
</evidence>
<organism>
    <name type="scientific">Pseudomonas entomophila (strain L48)</name>
    <dbReference type="NCBI Taxonomy" id="384676"/>
    <lineage>
        <taxon>Bacteria</taxon>
        <taxon>Pseudomonadati</taxon>
        <taxon>Pseudomonadota</taxon>
        <taxon>Gammaproteobacteria</taxon>
        <taxon>Pseudomonadales</taxon>
        <taxon>Pseudomonadaceae</taxon>
        <taxon>Pseudomonas</taxon>
    </lineage>
</organism>
<feature type="chain" id="PRO_1000053857" description="Bifunctional protein PyrR">
    <location>
        <begin position="1"/>
        <end position="172"/>
    </location>
</feature>
<feature type="short sequence motif" description="PRPP-binding" evidence="1">
    <location>
        <begin position="90"/>
        <end position="102"/>
    </location>
</feature>
<dbReference type="EC" id="2.4.2.9" evidence="1"/>
<dbReference type="EMBL" id="CT573326">
    <property type="protein sequence ID" value="CAK17693.1"/>
    <property type="molecule type" value="Genomic_DNA"/>
</dbReference>
<dbReference type="RefSeq" id="WP_011536053.1">
    <property type="nucleotide sequence ID" value="NC_008027.1"/>
</dbReference>
<dbReference type="SMR" id="Q1I3U3"/>
<dbReference type="STRING" id="384676.PSEEN5060"/>
<dbReference type="GeneID" id="32807998"/>
<dbReference type="KEGG" id="pen:PSEEN5060"/>
<dbReference type="eggNOG" id="COG2065">
    <property type="taxonomic scope" value="Bacteria"/>
</dbReference>
<dbReference type="HOGENOM" id="CLU_094234_1_1_6"/>
<dbReference type="OrthoDB" id="9802227at2"/>
<dbReference type="Proteomes" id="UP000000658">
    <property type="component" value="Chromosome"/>
</dbReference>
<dbReference type="GO" id="GO:0004845">
    <property type="term" value="F:uracil phosphoribosyltransferase activity"/>
    <property type="evidence" value="ECO:0007669"/>
    <property type="project" value="UniProtKB-UniRule"/>
</dbReference>
<dbReference type="GO" id="GO:0006355">
    <property type="term" value="P:regulation of DNA-templated transcription"/>
    <property type="evidence" value="ECO:0007669"/>
    <property type="project" value="UniProtKB-UniRule"/>
</dbReference>
<dbReference type="CDD" id="cd06223">
    <property type="entry name" value="PRTases_typeI"/>
    <property type="match status" value="1"/>
</dbReference>
<dbReference type="Gene3D" id="3.40.50.2020">
    <property type="match status" value="1"/>
</dbReference>
<dbReference type="HAMAP" id="MF_01219">
    <property type="entry name" value="PyrR"/>
    <property type="match status" value="1"/>
</dbReference>
<dbReference type="InterPro" id="IPR000836">
    <property type="entry name" value="PRibTrfase_dom"/>
</dbReference>
<dbReference type="InterPro" id="IPR029057">
    <property type="entry name" value="PRTase-like"/>
</dbReference>
<dbReference type="InterPro" id="IPR023050">
    <property type="entry name" value="PyrR"/>
</dbReference>
<dbReference type="InterPro" id="IPR050137">
    <property type="entry name" value="PyrR_bifunctional"/>
</dbReference>
<dbReference type="NCBIfam" id="NF003545">
    <property type="entry name" value="PRK05205.1-1"/>
    <property type="match status" value="1"/>
</dbReference>
<dbReference type="PANTHER" id="PTHR11608">
    <property type="entry name" value="BIFUNCTIONAL PROTEIN PYRR"/>
    <property type="match status" value="1"/>
</dbReference>
<dbReference type="PANTHER" id="PTHR11608:SF0">
    <property type="entry name" value="BIFUNCTIONAL PROTEIN PYRR"/>
    <property type="match status" value="1"/>
</dbReference>
<dbReference type="Pfam" id="PF00156">
    <property type="entry name" value="Pribosyltran"/>
    <property type="match status" value="1"/>
</dbReference>
<dbReference type="SUPFAM" id="SSF53271">
    <property type="entry name" value="PRTase-like"/>
    <property type="match status" value="1"/>
</dbReference>
<name>PYRR_PSEE4</name>
<reference key="1">
    <citation type="journal article" date="2006" name="Nat. Biotechnol.">
        <title>Complete genome sequence of the entomopathogenic and metabolically versatile soil bacterium Pseudomonas entomophila.</title>
        <authorList>
            <person name="Vodovar N."/>
            <person name="Vallenet D."/>
            <person name="Cruveiller S."/>
            <person name="Rouy Z."/>
            <person name="Barbe V."/>
            <person name="Acosta C."/>
            <person name="Cattolico L."/>
            <person name="Jubin C."/>
            <person name="Lajus A."/>
            <person name="Segurens B."/>
            <person name="Vacherie B."/>
            <person name="Wincker P."/>
            <person name="Weissenbach J."/>
            <person name="Lemaitre B."/>
            <person name="Medigue C."/>
            <person name="Boccard F."/>
        </authorList>
    </citation>
    <scope>NUCLEOTIDE SEQUENCE [LARGE SCALE GENOMIC DNA]</scope>
    <source>
        <strain>L48</strain>
    </source>
</reference>
<comment type="function">
    <text evidence="1">Regulates the transcription of the pyrimidine nucleotide (pyr) operon in response to exogenous pyrimidines.</text>
</comment>
<comment type="function">
    <text evidence="1">Also displays a weak uracil phosphoribosyltransferase activity which is not physiologically significant.</text>
</comment>
<comment type="catalytic activity">
    <reaction evidence="1">
        <text>UMP + diphosphate = 5-phospho-alpha-D-ribose 1-diphosphate + uracil</text>
        <dbReference type="Rhea" id="RHEA:13017"/>
        <dbReference type="ChEBI" id="CHEBI:17568"/>
        <dbReference type="ChEBI" id="CHEBI:33019"/>
        <dbReference type="ChEBI" id="CHEBI:57865"/>
        <dbReference type="ChEBI" id="CHEBI:58017"/>
        <dbReference type="EC" id="2.4.2.9"/>
    </reaction>
</comment>
<comment type="similarity">
    <text evidence="1">Belongs to the purine/pyrimidine phosphoribosyltransferase family. PyrR subfamily.</text>
</comment>